<comment type="function">
    <text evidence="1">Catalyzes the rearrangement of 1-deoxy-D-xylulose 5-phosphate (DXP) to produce the thiazole phosphate moiety of thiamine. Sulfur is provided by the thiocarboxylate moiety of the carrier protein ThiS. In vitro, sulfur can be provided by H(2)S.</text>
</comment>
<comment type="catalytic activity">
    <reaction evidence="1">
        <text>[ThiS sulfur-carrier protein]-C-terminal-Gly-aminoethanethioate + 2-iminoacetate + 1-deoxy-D-xylulose 5-phosphate = [ThiS sulfur-carrier protein]-C-terminal Gly-Gly + 2-[(2R,5Z)-2-carboxy-4-methylthiazol-5(2H)-ylidene]ethyl phosphate + 2 H2O + H(+)</text>
        <dbReference type="Rhea" id="RHEA:26297"/>
        <dbReference type="Rhea" id="RHEA-COMP:12909"/>
        <dbReference type="Rhea" id="RHEA-COMP:19908"/>
        <dbReference type="ChEBI" id="CHEBI:15377"/>
        <dbReference type="ChEBI" id="CHEBI:15378"/>
        <dbReference type="ChEBI" id="CHEBI:57792"/>
        <dbReference type="ChEBI" id="CHEBI:62899"/>
        <dbReference type="ChEBI" id="CHEBI:77846"/>
        <dbReference type="ChEBI" id="CHEBI:90778"/>
        <dbReference type="ChEBI" id="CHEBI:232372"/>
        <dbReference type="EC" id="2.8.1.10"/>
    </reaction>
</comment>
<comment type="pathway">
    <text evidence="1">Cofactor biosynthesis; thiamine diphosphate biosynthesis.</text>
</comment>
<comment type="subunit">
    <text evidence="1">Homotetramer. Forms heterodimers with either ThiH or ThiS.</text>
</comment>
<comment type="subcellular location">
    <subcellularLocation>
        <location evidence="1">Cytoplasm</location>
    </subcellularLocation>
</comment>
<comment type="similarity">
    <text evidence="1">Belongs to the ThiG family.</text>
</comment>
<protein>
    <recommendedName>
        <fullName evidence="1">Thiazole synthase</fullName>
        <ecNumber evidence="1">2.8.1.10</ecNumber>
    </recommendedName>
</protein>
<feature type="chain" id="PRO_1000196850" description="Thiazole synthase">
    <location>
        <begin position="1"/>
        <end position="259"/>
    </location>
</feature>
<feature type="active site" description="Schiff-base intermediate with DXP" evidence="1">
    <location>
        <position position="95"/>
    </location>
</feature>
<feature type="binding site" evidence="1">
    <location>
        <position position="156"/>
    </location>
    <ligand>
        <name>1-deoxy-D-xylulose 5-phosphate</name>
        <dbReference type="ChEBI" id="CHEBI:57792"/>
    </ligand>
</feature>
<feature type="binding site" evidence="1">
    <location>
        <begin position="183"/>
        <end position="184"/>
    </location>
    <ligand>
        <name>1-deoxy-D-xylulose 5-phosphate</name>
        <dbReference type="ChEBI" id="CHEBI:57792"/>
    </ligand>
</feature>
<feature type="binding site" evidence="1">
    <location>
        <begin position="205"/>
        <end position="206"/>
    </location>
    <ligand>
        <name>1-deoxy-D-xylulose 5-phosphate</name>
        <dbReference type="ChEBI" id="CHEBI:57792"/>
    </ligand>
</feature>
<sequence>MWAIGGVQLNSRLLLGTAQYPSPQLMSDAVKAAGVEIITVSLRRQLSPQKENYFWDLLRSLPCHLLPNTAGCSSVKEAVNTARAARELFNTHWIKLEIIGDEYTLQPNPFELVNAATILVKEGFEVFPYCTEDLILCQRLVDAGCRVLMPWAAPIGSGRGLMNTYALQLLRERFPKNILIIDAGLGRPSHAAQVMEMGFDAVLLNSAVALAMDPVVMAAGFAKAVEGGRLGYEGGMIKARNVAKATTPLIGKPFLIEKP</sequence>
<evidence type="ECO:0000255" key="1">
    <source>
        <dbReference type="HAMAP-Rule" id="MF_00443"/>
    </source>
</evidence>
<gene>
    <name evidence="1" type="primary">thiG</name>
    <name type="ordered locus">CBUD_1746</name>
</gene>
<proteinExistence type="inferred from homology"/>
<reference key="1">
    <citation type="journal article" date="2009" name="Infect. Immun.">
        <title>Comparative genomics reveal extensive transposon-mediated genomic plasticity and diversity among potential effector proteins within the genus Coxiella.</title>
        <authorList>
            <person name="Beare P.A."/>
            <person name="Unsworth N."/>
            <person name="Andoh M."/>
            <person name="Voth D.E."/>
            <person name="Omsland A."/>
            <person name="Gilk S.D."/>
            <person name="Williams K.P."/>
            <person name="Sobral B.W."/>
            <person name="Kupko J.J. III"/>
            <person name="Porcella S.F."/>
            <person name="Samuel J.E."/>
            <person name="Heinzen R.A."/>
        </authorList>
    </citation>
    <scope>NUCLEOTIDE SEQUENCE [LARGE SCALE GENOMIC DNA]</scope>
    <source>
        <strain>Dugway 5J108-111</strain>
    </source>
</reference>
<dbReference type="EC" id="2.8.1.10" evidence="1"/>
<dbReference type="EMBL" id="CP000733">
    <property type="protein sequence ID" value="ABS76512.1"/>
    <property type="molecule type" value="Genomic_DNA"/>
</dbReference>
<dbReference type="RefSeq" id="WP_005769203.1">
    <property type="nucleotide sequence ID" value="NC_009727.1"/>
</dbReference>
<dbReference type="SMR" id="A9KGN4"/>
<dbReference type="KEGG" id="cbd:CBUD_1746"/>
<dbReference type="HOGENOM" id="CLU_062233_1_0_6"/>
<dbReference type="UniPathway" id="UPA00060"/>
<dbReference type="Proteomes" id="UP000008555">
    <property type="component" value="Chromosome"/>
</dbReference>
<dbReference type="GO" id="GO:0005737">
    <property type="term" value="C:cytoplasm"/>
    <property type="evidence" value="ECO:0007669"/>
    <property type="project" value="UniProtKB-SubCell"/>
</dbReference>
<dbReference type="GO" id="GO:1990107">
    <property type="term" value="F:thiazole synthase activity"/>
    <property type="evidence" value="ECO:0007669"/>
    <property type="project" value="UniProtKB-EC"/>
</dbReference>
<dbReference type="GO" id="GO:0009229">
    <property type="term" value="P:thiamine diphosphate biosynthetic process"/>
    <property type="evidence" value="ECO:0007669"/>
    <property type="project" value="UniProtKB-UniRule"/>
</dbReference>
<dbReference type="CDD" id="cd04728">
    <property type="entry name" value="ThiG"/>
    <property type="match status" value="1"/>
</dbReference>
<dbReference type="Gene3D" id="3.20.20.70">
    <property type="entry name" value="Aldolase class I"/>
    <property type="match status" value="1"/>
</dbReference>
<dbReference type="HAMAP" id="MF_00443">
    <property type="entry name" value="ThiG"/>
    <property type="match status" value="1"/>
</dbReference>
<dbReference type="InterPro" id="IPR013785">
    <property type="entry name" value="Aldolase_TIM"/>
</dbReference>
<dbReference type="InterPro" id="IPR033983">
    <property type="entry name" value="Thiazole_synthase_ThiG"/>
</dbReference>
<dbReference type="InterPro" id="IPR008867">
    <property type="entry name" value="ThiG"/>
</dbReference>
<dbReference type="PANTHER" id="PTHR34266">
    <property type="entry name" value="THIAZOLE SYNTHASE"/>
    <property type="match status" value="1"/>
</dbReference>
<dbReference type="PANTHER" id="PTHR34266:SF2">
    <property type="entry name" value="THIAZOLE SYNTHASE"/>
    <property type="match status" value="1"/>
</dbReference>
<dbReference type="Pfam" id="PF05690">
    <property type="entry name" value="ThiG"/>
    <property type="match status" value="1"/>
</dbReference>
<dbReference type="SUPFAM" id="SSF110399">
    <property type="entry name" value="ThiG-like"/>
    <property type="match status" value="1"/>
</dbReference>
<keyword id="KW-0963">Cytoplasm</keyword>
<keyword id="KW-0704">Schiff base</keyword>
<keyword id="KW-0784">Thiamine biosynthesis</keyword>
<keyword id="KW-0808">Transferase</keyword>
<accession>A9KGN4</accession>
<organism>
    <name type="scientific">Coxiella burnetii (strain Dugway 5J108-111)</name>
    <dbReference type="NCBI Taxonomy" id="434922"/>
    <lineage>
        <taxon>Bacteria</taxon>
        <taxon>Pseudomonadati</taxon>
        <taxon>Pseudomonadota</taxon>
        <taxon>Gammaproteobacteria</taxon>
        <taxon>Legionellales</taxon>
        <taxon>Coxiellaceae</taxon>
        <taxon>Coxiella</taxon>
    </lineage>
</organism>
<name>THIG_COXBN</name>